<name>SIRP_LEPMC</name>
<reference key="1">
    <citation type="journal article" date="2004" name="Mol. Microbiol.">
        <title>The sirodesmin biosynthetic gene cluster of the plant pathogenic fungus Leptosphaeria maculans.</title>
        <authorList>
            <person name="Gardiner D.M."/>
            <person name="Cozijnsen A.J."/>
            <person name="Wilson L.M."/>
            <person name="Pedras M.S."/>
            <person name="Howlett B.J."/>
        </authorList>
    </citation>
    <scope>NUCLEOTIDE SEQUENCE [GENOMIC DNA]</scope>
    <scope>FUNCTION</scope>
    <scope>DISRUPTION PHENOTYPE</scope>
    <scope>INDUCTION</scope>
</reference>
<reference key="2">
    <citation type="journal article" date="2008" name="Mycol. Res.">
        <title>Biosynthetic gene clusters for epipolythiodioxopiperazines in filamentous fungi.</title>
        <authorList>
            <person name="Fox E.M."/>
            <person name="Howlett B.J."/>
        </authorList>
    </citation>
    <scope>FUNCTION</scope>
</reference>
<reference key="3">
    <citation type="journal article" date="2010" name="Microbiology">
        <title>A tyrosine O-prenyltransferase catalyses the first pathway-specific step in the biosynthesis of sirodesmin PL.</title>
        <authorList>
            <person name="Kremer A."/>
            <person name="Li S.M."/>
        </authorList>
    </citation>
    <scope>FUNCTION</scope>
</reference>
<reference key="4">
    <citation type="journal article" date="2011" name="Appl. Microbiol. Biotechnol.">
        <title>The tyrosine O-prenyltransferase SirD catalyzes O-, N-, and C-prenylations.</title>
        <authorList>
            <person name="Zou H.X."/>
            <person name="Xie X."/>
            <person name="Zheng X.D."/>
            <person name="Li S.M."/>
        </authorList>
    </citation>
    <scope>FUNCTION</scope>
</reference>
<reference key="5">
    <citation type="journal article" date="2013" name="ACS Chem. Biol.">
        <title>Tyrosine O-prenyltransferase SirD catalyzes S-, C-, and N-prenylations on tyrosine and tryptophan derivatives.</title>
        <authorList>
            <person name="Rudolf J.D."/>
            <person name="Poulter C.D."/>
        </authorList>
    </citation>
    <scope>FUNCTION</scope>
</reference>
<reference key="6">
    <citation type="journal article" date="2007" name="Mol. Plant Pathol.">
        <title>Production of the toxin sirodesmin PL by Leptosphaeria maculans during infection of Brassica napus.</title>
        <authorList>
            <person name="Elliott C.E."/>
            <person name="Gardiner D.M."/>
            <person name="Thomas G."/>
            <person name="Cozijnsen A."/>
            <person name="Van de Wouw A."/>
            <person name="Howlett B.J."/>
        </authorList>
    </citation>
    <scope>DISRUPTION PHENOTYPE</scope>
    <scope>INDUCTION</scope>
</reference>
<reference key="7">
    <citation type="journal article" date="2016" name="PLoS ONE">
        <title>The epipolythiodiketopiperazine gene cluster in Claviceps purpurea: dysfunctional cytochrome P450 enzyme prevents formation of the previously unknown clapurines.</title>
        <authorList>
            <person name="Dopstadt J."/>
            <person name="Neubauer L."/>
            <person name="Tudzynski P."/>
            <person name="Humpf H.U."/>
        </authorList>
    </citation>
    <scope>FUNCTION</scope>
</reference>
<proteinExistence type="evidence at transcript level"/>
<comment type="function">
    <text evidence="6 8 9 10 13 14">Nonribosomal peptide synthetase; part of the gene cluster that mediates the biosynthesis of sirodesmin PL, an epipolythiodioxopiperazine (ETP) characterized by a disulfide bridged cyclic dipeptide and that acts as a phytotoxin which is involved in the blackleg didease of canola (PubMed:15387811, PubMed:18272357, PubMed:19762440). SirD catalyzes the O-prenylation of L-tyrosine (L-Tyr) in the presence of dimethylallyl diphosphate (DMAPP) to yield 4-O-dimethylallyl-L-Tyr, and therefore represents probably the first pathway-specific enzyme in the biosynthesis of sirodesmin PL (PubMed:19762440, PubMed:21038099, PubMed:24083562). 4-O-dimethylallyl-L-Tyr, then undergoes condensation with L-Ser in a reaction catalyzed by the non-ribosomal peptide synthase sirP to form the diketopiperazine (DKP) backbone (PubMed:18272357). Further bishydroxylation of the DKP performed by the cytochrome P450 monooxygenase sirC leads to the production of the intermediate phomamide (PubMed:27390873). This step is essential to form the reactive thiol group required for toxicity of sirodesmin PL (PubMed:27390873). The next steps of sirodesmin biosynthesis are not well understood yet, but some predictions could be made from intermediate compounds identification (PubMed:18272357). Phomamide is converted into phomalizarine via oxidation, probably by sirT (PubMed:18272357). Further oxidation, methylation (by sirM or sirN) and reduction steps convert phomalizarine to deacetyl sirodesmin (PubMed:18272357). Finally, acetyltransferase sirH probably acetylates deacetyl sirodesmin to produce sirodesmin PL (PubMed:18272357).</text>
</comment>
<comment type="pathway">
    <text evidence="13">Mycotoxin biosynthesis.</text>
</comment>
<comment type="induction">
    <text evidence="5 7">Expressed during canola infection (PubMed:20507539). Expression is co-regulated with the other genes from the sirodesmin cluster and corresponds with sirodesmin production (PubMed:15387811).</text>
</comment>
<comment type="domain">
    <text evidence="1 13">NRP synthetases are composed of discrete domains (adenylation (A), thiolation (T) or peptidyl carrier protein (PCP) and condensation (C) domains) which when grouped together are referred to as a single module (By similarity). Each module is responsible for the recognition (via the A domain) and incorporation of a single amino acid into the growing peptide product (By similarity). Thus, an NRP synthetase is generally composed of one or more modules and can terminate in a thioesterase domain (TE) that releases the newly synthesized peptide from the enzyme (By similarity). Occasionally, epimerase (E) domains (responsible for L- to D-amino acid conversion) are present within the NRP synthetase (By similarity). NRPS10 has the foolowing architecture: A-T-C-A-T-C (PubMed:15387811).</text>
</comment>
<comment type="disruption phenotype">
    <text evidence="5 7">Impairs the production of sirodesmin PL (PubMed:15387811, PubMed:20507539). Decreases the number of lesions and the efficiency in colonizing stems during infection of canola (PubMed:20507539).</text>
</comment>
<comment type="similarity">
    <text evidence="12">Belongs to the NRP synthetase family.</text>
</comment>
<evidence type="ECO:0000250" key="1">
    <source>
        <dbReference type="UniProtKB" id="Q4WMJ7"/>
    </source>
</evidence>
<evidence type="ECO:0000255" key="2"/>
<evidence type="ECO:0000255" key="3">
    <source>
        <dbReference type="PROSITE-ProRule" id="PRU00258"/>
    </source>
</evidence>
<evidence type="ECO:0000256" key="4">
    <source>
        <dbReference type="SAM" id="MobiDB-lite"/>
    </source>
</evidence>
<evidence type="ECO:0000269" key="5">
    <source>
    </source>
</evidence>
<evidence type="ECO:0000269" key="6">
    <source>
    </source>
</evidence>
<evidence type="ECO:0000269" key="7">
    <source>
    </source>
</evidence>
<evidence type="ECO:0000269" key="8">
    <source>
    </source>
</evidence>
<evidence type="ECO:0000269" key="9">
    <source>
    </source>
</evidence>
<evidence type="ECO:0000269" key="10">
    <source>
    </source>
</evidence>
<evidence type="ECO:0000303" key="11">
    <source>
    </source>
</evidence>
<evidence type="ECO:0000305" key="12"/>
<evidence type="ECO:0000305" key="13">
    <source>
    </source>
</evidence>
<evidence type="ECO:0000305" key="14">
    <source>
    </source>
</evidence>
<feature type="chain" id="PRO_0000437700" description="Nonribosomal peptide synthetase sirP">
    <location>
        <begin position="1"/>
        <end position="2176"/>
    </location>
</feature>
<feature type="domain" description="Carrier 1" evidence="3">
    <location>
        <begin position="534"/>
        <end position="610"/>
    </location>
</feature>
<feature type="domain" description="Carrier 2" evidence="3">
    <location>
        <begin position="1570"/>
        <end position="1646"/>
    </location>
</feature>
<feature type="domain" description="Carrier 3" evidence="3">
    <location>
        <begin position="2106"/>
        <end position="2176"/>
    </location>
</feature>
<feature type="region of interest" description="Disordered" evidence="4">
    <location>
        <begin position="16"/>
        <end position="38"/>
    </location>
</feature>
<feature type="region of interest" description="Adenylation 1" evidence="2">
    <location>
        <begin position="51"/>
        <end position="434"/>
    </location>
</feature>
<feature type="region of interest" description="Condensation 1" evidence="2">
    <location>
        <begin position="643"/>
        <end position="1073"/>
    </location>
</feature>
<feature type="region of interest" description="Adenylation 2" evidence="2">
    <location>
        <begin position="1094"/>
        <end position="1474"/>
    </location>
</feature>
<feature type="region of interest" description="Condensation 2" evidence="2">
    <location>
        <begin position="1661"/>
        <end position="2070"/>
    </location>
</feature>
<feature type="compositionally biased region" description="Basic and acidic residues" evidence="4">
    <location>
        <begin position="16"/>
        <end position="31"/>
    </location>
</feature>
<feature type="modified residue" description="O-(pantetheine 4'-phosphoryl)serine" evidence="3">
    <location>
        <position position="571"/>
    </location>
</feature>
<feature type="modified residue" description="O-(pantetheine 4'-phosphoryl)serine" evidence="3">
    <location>
        <position position="1606"/>
    </location>
</feature>
<feature type="modified residue" description="O-(pantetheine 4'-phosphoryl)serine" evidence="3">
    <location>
        <position position="2140"/>
    </location>
</feature>
<keyword id="KW-0413">Isomerase</keyword>
<keyword id="KW-0436">Ligase</keyword>
<keyword id="KW-0596">Phosphopantetheine</keyword>
<keyword id="KW-0597">Phosphoprotein</keyword>
<keyword id="KW-0677">Repeat</keyword>
<keyword id="KW-0843">Virulence</keyword>
<protein>
    <recommendedName>
        <fullName evidence="11">Nonribosomal peptide synthetase sirP</fullName>
        <shortName evidence="12">NRPS sirP</shortName>
        <ecNumber evidence="13">6.3.2.-</ecNumber>
    </recommendedName>
    <alternativeName>
        <fullName evidence="11">Sirodesmin biosynthesis protein P</fullName>
    </alternativeName>
</protein>
<gene>
    <name evidence="11" type="primary">sirP</name>
</gene>
<dbReference type="EC" id="6.3.2.-" evidence="13"/>
<dbReference type="EMBL" id="AY553235">
    <property type="protein sequence ID" value="AAS92545.1"/>
    <property type="molecule type" value="Genomic_DNA"/>
</dbReference>
<dbReference type="SMR" id="Q6Q883"/>
<dbReference type="GO" id="GO:0005737">
    <property type="term" value="C:cytoplasm"/>
    <property type="evidence" value="ECO:0007669"/>
    <property type="project" value="TreeGrafter"/>
</dbReference>
<dbReference type="GO" id="GO:0016853">
    <property type="term" value="F:isomerase activity"/>
    <property type="evidence" value="ECO:0007669"/>
    <property type="project" value="UniProtKB-KW"/>
</dbReference>
<dbReference type="GO" id="GO:0016874">
    <property type="term" value="F:ligase activity"/>
    <property type="evidence" value="ECO:0007669"/>
    <property type="project" value="UniProtKB-KW"/>
</dbReference>
<dbReference type="GO" id="GO:0031177">
    <property type="term" value="F:phosphopantetheine binding"/>
    <property type="evidence" value="ECO:0007669"/>
    <property type="project" value="InterPro"/>
</dbReference>
<dbReference type="GO" id="GO:0043041">
    <property type="term" value="P:amino acid activation for nonribosomal peptide biosynthetic process"/>
    <property type="evidence" value="ECO:0007669"/>
    <property type="project" value="TreeGrafter"/>
</dbReference>
<dbReference type="GO" id="GO:0044550">
    <property type="term" value="P:secondary metabolite biosynthetic process"/>
    <property type="evidence" value="ECO:0007669"/>
    <property type="project" value="TreeGrafter"/>
</dbReference>
<dbReference type="CDD" id="cd17653">
    <property type="entry name" value="A_NRPS_GliP_like"/>
    <property type="match status" value="2"/>
</dbReference>
<dbReference type="CDD" id="cd19545">
    <property type="entry name" value="FUM14_C_NRPS-like"/>
    <property type="match status" value="1"/>
</dbReference>
<dbReference type="Gene3D" id="3.30.300.30">
    <property type="match status" value="2"/>
</dbReference>
<dbReference type="Gene3D" id="1.10.1200.10">
    <property type="entry name" value="ACP-like"/>
    <property type="match status" value="3"/>
</dbReference>
<dbReference type="Gene3D" id="3.30.559.10">
    <property type="entry name" value="Chloramphenicol acetyltransferase-like domain"/>
    <property type="match status" value="2"/>
</dbReference>
<dbReference type="Gene3D" id="3.40.50.12780">
    <property type="entry name" value="N-terminal domain of ligase-like"/>
    <property type="match status" value="2"/>
</dbReference>
<dbReference type="Gene3D" id="3.30.559.30">
    <property type="entry name" value="Nonribosomal peptide synthetase, condensation domain"/>
    <property type="match status" value="2"/>
</dbReference>
<dbReference type="InterPro" id="IPR010071">
    <property type="entry name" value="AA_adenyl_dom"/>
</dbReference>
<dbReference type="InterPro" id="IPR036736">
    <property type="entry name" value="ACP-like_sf"/>
</dbReference>
<dbReference type="InterPro" id="IPR045851">
    <property type="entry name" value="AMP-bd_C_sf"/>
</dbReference>
<dbReference type="InterPro" id="IPR020845">
    <property type="entry name" value="AMP-binding_CS"/>
</dbReference>
<dbReference type="InterPro" id="IPR000873">
    <property type="entry name" value="AMP-dep_synth/lig_dom"/>
</dbReference>
<dbReference type="InterPro" id="IPR042099">
    <property type="entry name" value="ANL_N_sf"/>
</dbReference>
<dbReference type="InterPro" id="IPR023213">
    <property type="entry name" value="CAT-like_dom_sf"/>
</dbReference>
<dbReference type="InterPro" id="IPR001242">
    <property type="entry name" value="Condensatn"/>
</dbReference>
<dbReference type="InterPro" id="IPR020806">
    <property type="entry name" value="PKS_PP-bd"/>
</dbReference>
<dbReference type="InterPro" id="IPR009081">
    <property type="entry name" value="PP-bd_ACP"/>
</dbReference>
<dbReference type="InterPro" id="IPR006162">
    <property type="entry name" value="Ppantetheine_attach_site"/>
</dbReference>
<dbReference type="NCBIfam" id="TIGR01733">
    <property type="entry name" value="AA-adenyl-dom"/>
    <property type="match status" value="1"/>
</dbReference>
<dbReference type="PANTHER" id="PTHR45527">
    <property type="entry name" value="NONRIBOSOMAL PEPTIDE SYNTHETASE"/>
    <property type="match status" value="1"/>
</dbReference>
<dbReference type="PANTHER" id="PTHR45527:SF11">
    <property type="entry name" value="NONRIBOSOMAL PEPTIDE SYNTHETASE 5"/>
    <property type="match status" value="1"/>
</dbReference>
<dbReference type="Pfam" id="PF00501">
    <property type="entry name" value="AMP-binding"/>
    <property type="match status" value="2"/>
</dbReference>
<dbReference type="Pfam" id="PF00668">
    <property type="entry name" value="Condensation"/>
    <property type="match status" value="2"/>
</dbReference>
<dbReference type="Pfam" id="PF00550">
    <property type="entry name" value="PP-binding"/>
    <property type="match status" value="2"/>
</dbReference>
<dbReference type="SMART" id="SM00823">
    <property type="entry name" value="PKS_PP"/>
    <property type="match status" value="2"/>
</dbReference>
<dbReference type="SUPFAM" id="SSF56801">
    <property type="entry name" value="Acetyl-CoA synthetase-like"/>
    <property type="match status" value="2"/>
</dbReference>
<dbReference type="SUPFAM" id="SSF47336">
    <property type="entry name" value="ACP-like"/>
    <property type="match status" value="3"/>
</dbReference>
<dbReference type="SUPFAM" id="SSF52777">
    <property type="entry name" value="CoA-dependent acyltransferases"/>
    <property type="match status" value="4"/>
</dbReference>
<dbReference type="PROSITE" id="PS00455">
    <property type="entry name" value="AMP_BINDING"/>
    <property type="match status" value="1"/>
</dbReference>
<dbReference type="PROSITE" id="PS50075">
    <property type="entry name" value="CARRIER"/>
    <property type="match status" value="3"/>
</dbReference>
<dbReference type="PROSITE" id="PS00012">
    <property type="entry name" value="PHOSPHOPANTETHEINE"/>
    <property type="match status" value="1"/>
</dbReference>
<organism>
    <name type="scientific">Leptosphaeria maculans</name>
    <name type="common">Blackleg fungus</name>
    <name type="synonym">Phoma lingam</name>
    <dbReference type="NCBI Taxonomy" id="5022"/>
    <lineage>
        <taxon>Eukaryota</taxon>
        <taxon>Fungi</taxon>
        <taxon>Dikarya</taxon>
        <taxon>Ascomycota</taxon>
        <taxon>Pezizomycotina</taxon>
        <taxon>Dothideomycetes</taxon>
        <taxon>Pleosporomycetidae</taxon>
        <taxon>Pleosporales</taxon>
        <taxon>Pleosporineae</taxon>
        <taxon>Leptosphaeriaceae</taxon>
        <taxon>Plenodomus</taxon>
        <taxon>Plenodomus lingam/Leptosphaeria maculans species complex</taxon>
    </lineage>
</organism>
<accession>Q6Q883</accession>
<sequence length="2176" mass="241505">MHITKDIDTIFHRSLEGLTGDDHSPESRRDFPMSQSSGCRNGTDATVCHIFERIASQFPESVAAEDGGRNITYGELHYASNHLANHLSQIGIQSGQKIVIISNRSLEMIVALLGIMKSGACVVPIDFETWSQDRIQTTLETTQCRYAISTKCIEIPNQELILFQEGDLQHVLDNRRDQPASFSTRGFQLPSADDLAYTIFTSGTTSKPKGVMVPHSAIAHYVQQVSDEAPFNLNVQASSRVLLVFSVAFDACLGVVLSTICNGGTLILATSMNFATVATTCTILPLTPTILSTLRPGAEYDSIKSIFLGGESPSPNLLRPWLNGERRIFNCYGPTETTCTSLIKEVLPDEPNHLRYTVAGSSVVLLDGNLREVSEGEIAISGPGLAVGYFNNQALTAEKFIVYKGVRHYLTGDYGRKTSFGIDFLGRKDRVVKNRGFLINLEAEVEAVITNMKLANSAAALMHEGRLIMFVTPETIDVSSLRSRLLEIRDSFLVPDRIYAICSFPITSNGKVDLASLRQLLQEEKFTGVATHQSSPSSNLYVVLEGFSKVLGLPPSALCGSSSFLDNGGNSLSAVSLASHLRERGLSITVREIFESDTAQRICDTLSATILSTSDSEEADLESLRENVVRAGYPLTPRMEVAYMTAIQVNMIQSTIKMPSMNYIQLSITFDLSSGLFKPEVFRRAWEIIVQRHSILRATFIPALEATVIAADPTMDWREQLVDSSEWDSAVADAREKILCSMAPLDAEYLKPRSIFRLITEPKSRTEFIWTIHHSLVDGWSIAVIMRDLQCILSQEELPKVAQFTSVATVQKALAQRSLSRGKQQSWEEKMQNYIPAPRLRLPKPQGWARAARAERRQLLGVHRSQVQRFVQEYRVSDASIFLASWALVLSKYLSTDRVLFGVVLSGRNLPMAAVDQVVGPLLDTVPFPVNTTSTQSTAEFLRTIHGTLHEMNESPWEMKLQKSSMGPESLETLVALQYDLPDSTWNVDPKTWPSPQSMKHNETTELPLHILIDMQNGGDLEARYLYDCSHFEAAMIDQMLSHFSNMLKAILMHPTVELVKSSMMNQLEINDLLYSSPHMHDAYDGPQSLKQAFEEVVDTWPDAIAVESVSDSISYKELDHRSSAISNALLPLVGPGQIVGILSDGSVSWITAILAVLKAGAAYCPIDIALPEERIKVMLRESRCSLLLCTTEDLCELWANHSDLTCFSIGRLLSETLQTPERLPERCSPHDPAAVIFTSGSTGVPKGILLEHIGILSLLDFPNARLRSGPGRRNAQFLSLGFDCCVNEVFATLCYGATLVLRDPLDPVQHIKRVHATMCTPSFLATLDVNDFPNLELIALAGEPVPQKLVDTWGHNRVLLNVYSPSECTISTVYPQLYPGVQVTLGSPVPRQAIYILDKDLNPVPVGVPGEICISGIQVTRGYLNRPEETLVKFLPNPFQKGWRLYRSGDLGRLTNSHEIEYIGRIDNQVKVRGFRIELEEIESTIAALNPEVRQAAVIVVNDVLIGFVTPSSLDTLAIQAIISRHLPSYCRPSYFVALDNMPMSSNQKIDRKKLVSMKAERNHFTKVPIEGTTERIIQEIWKDLIPELGEVSALDNFLQIGGHSLLQARLTRQLGMALGNRIPLRIVIQNPVLRDLALAIDKHILDGGSEDISRGQPEQNTVLSHLEEEMYTVHMLSSEPSAWNIPYIARLTGPLNLAAFEASWNNIIRSNSILRARYQIKDGILTRSISTSISPVTRRYCKVTDDALLDIVNRAFDLANDQPIRLDLCLDRPTMSYVVLNMSHMIGDRSTMGEILRLLEEEYAQMILNDNFNLHEPLSESLPYSVWTAMRRKREVDAGLTHVLQKSLNPSLINPPLFGTFKQELACSAHRDKRIEGDLFSSLKNLRGRFKASGHQLAIAAIGLTLHRLSHREDFIIAAPIEDRTEAGTENMFGLFLDRLLIPLRFNLHSPHSADDLIHMVKSASEQAMANYIPFADLKNVLGMVGKSHSLCEIMVTYHASDLQGPNLTGVDALGIPVQPKGVKFPLMLEFSEFPESIGIDLAYDSHAIDNATMDEFEVQLMAAFRYLADETCSSTCTTYPPRLFPLIWSQKDTNTVAPISEDQEMIDLVREAMAECVGLNRCDISCSRSFFELGGSSVDCLRLQDRLIKSGVSVSLSSIIHLQTAELIAGAVE</sequence>